<dbReference type="EMBL" id="AB052336">
    <property type="protein sequence ID" value="BAB71994.1"/>
    <property type="molecule type" value="mRNA"/>
</dbReference>
<dbReference type="EMBL" id="AB052337">
    <property type="protein sequence ID" value="BAB71995.1"/>
    <property type="molecule type" value="mRNA"/>
</dbReference>
<dbReference type="EMBL" id="AB052338">
    <property type="protein sequence ID" value="BAB71996.1"/>
    <property type="molecule type" value="mRNA"/>
</dbReference>
<dbReference type="EMBL" id="AF475079">
    <property type="protein sequence ID" value="AAL84788.1"/>
    <property type="molecule type" value="mRNA"/>
</dbReference>
<dbReference type="EMBL" id="AF475080">
    <property type="protein sequence ID" value="AAL84789.1"/>
    <property type="molecule type" value="mRNA"/>
</dbReference>
<dbReference type="EMBL" id="AL772379">
    <property type="status" value="NOT_ANNOTATED_CDS"/>
    <property type="molecule type" value="Genomic_DNA"/>
</dbReference>
<dbReference type="EMBL" id="CH466542">
    <property type="protein sequence ID" value="EDL08409.1"/>
    <property type="molecule type" value="Genomic_DNA"/>
</dbReference>
<dbReference type="CCDS" id="CCDS15851.1">
    <molecule id="Q8R4F1-2"/>
</dbReference>
<dbReference type="CCDS" id="CCDS15852.1">
    <molecule id="Q8R4F1-1"/>
</dbReference>
<dbReference type="CCDS" id="CCDS84499.1">
    <molecule id="Q8R4F1-3"/>
</dbReference>
<dbReference type="RefSeq" id="NP_001292734.1">
    <molecule id="Q8R4F1-3"/>
    <property type="nucleotide sequence ID" value="NM_001305805.2"/>
</dbReference>
<dbReference type="RefSeq" id="NP_598007.1">
    <molecule id="Q8R4F1-2"/>
    <property type="nucleotide sequence ID" value="NM_133500.3"/>
</dbReference>
<dbReference type="RefSeq" id="NP_598008.1">
    <molecule id="Q8R4F1-1"/>
    <property type="nucleotide sequence ID" value="NM_133501.3"/>
</dbReference>
<dbReference type="SMR" id="Q8R4F1"/>
<dbReference type="BioGRID" id="228486">
    <property type="interactions" value="1"/>
</dbReference>
<dbReference type="FunCoup" id="Q8R4F1">
    <property type="interactions" value="413"/>
</dbReference>
<dbReference type="IntAct" id="Q8R4F1">
    <property type="interactions" value="1"/>
</dbReference>
<dbReference type="STRING" id="10090.ENSMUSP00000035468"/>
<dbReference type="GlyConnect" id="2533">
    <property type="glycosylation" value="2 N-Linked glycans (1 site)"/>
</dbReference>
<dbReference type="GlyCosmos" id="Q8R4F1">
    <property type="glycosylation" value="5 sites, 2 glycans"/>
</dbReference>
<dbReference type="GlyGen" id="Q8R4F1">
    <property type="glycosylation" value="6 sites, 6 N-linked glycans (5 sites)"/>
</dbReference>
<dbReference type="iPTMnet" id="Q8R4F1"/>
<dbReference type="PhosphoSitePlus" id="Q8R4F1"/>
<dbReference type="PaxDb" id="10090-ENSMUSP00000035468"/>
<dbReference type="ProteomicsDB" id="293768">
    <molecule id="Q8R4F1-1"/>
</dbReference>
<dbReference type="ProteomicsDB" id="293769">
    <molecule id="Q8R4F1-2"/>
</dbReference>
<dbReference type="ProteomicsDB" id="293770">
    <molecule id="Q8R4F1-3"/>
</dbReference>
<dbReference type="Antibodypedia" id="31663">
    <property type="antibodies" value="107 antibodies from 25 providers"/>
</dbReference>
<dbReference type="DNASU" id="171171"/>
<dbReference type="Ensembl" id="ENSMUST00000048455.9">
    <molecule id="Q8R4F1-1"/>
    <property type="protein sequence ID" value="ENSMUSP00000035468.3"/>
    <property type="gene ID" value="ENSMUSG00000035513.21"/>
</dbReference>
<dbReference type="Ensembl" id="ENSMUST00000091153.9">
    <molecule id="Q8R4F1-3"/>
    <property type="protein sequence ID" value="ENSMUSP00000088688.3"/>
    <property type="gene ID" value="ENSMUSG00000035513.21"/>
</dbReference>
<dbReference type="Ensembl" id="ENSMUST00000102873.8">
    <molecule id="Q8R4F1-2"/>
    <property type="protein sequence ID" value="ENSMUSP00000099937.2"/>
    <property type="gene ID" value="ENSMUSG00000035513.21"/>
</dbReference>
<dbReference type="GeneID" id="171171"/>
<dbReference type="KEGG" id="mmu:171171"/>
<dbReference type="UCSC" id="uc008izo.2">
    <molecule id="Q8R4F1-1"/>
    <property type="organism name" value="mouse"/>
</dbReference>
<dbReference type="UCSC" id="uc012btf.2">
    <molecule id="Q8R4F1-3"/>
    <property type="organism name" value="mouse"/>
</dbReference>
<dbReference type="AGR" id="MGI:2159341"/>
<dbReference type="CTD" id="84628"/>
<dbReference type="MGI" id="MGI:2159341">
    <property type="gene designation" value="Ntng2"/>
</dbReference>
<dbReference type="VEuPathDB" id="HostDB:ENSMUSG00000035513"/>
<dbReference type="eggNOG" id="KOG3512">
    <property type="taxonomic scope" value="Eukaryota"/>
</dbReference>
<dbReference type="GeneTree" id="ENSGT00940000153601"/>
<dbReference type="HOGENOM" id="CLU_039838_1_0_1"/>
<dbReference type="InParanoid" id="Q8R4F1"/>
<dbReference type="OMA" id="AGPDCEC"/>
<dbReference type="OrthoDB" id="9981301at2759"/>
<dbReference type="PhylomeDB" id="Q8R4F1"/>
<dbReference type="TreeFam" id="TF333945"/>
<dbReference type="BioGRID-ORCS" id="171171">
    <property type="hits" value="2 hits in 61 CRISPR screens"/>
</dbReference>
<dbReference type="CD-CODE" id="CE726F99">
    <property type="entry name" value="Postsynaptic density"/>
</dbReference>
<dbReference type="ChiTaRS" id="Ntng2">
    <property type="organism name" value="mouse"/>
</dbReference>
<dbReference type="PRO" id="PR:Q8R4F1"/>
<dbReference type="Proteomes" id="UP000000589">
    <property type="component" value="Chromosome 2"/>
</dbReference>
<dbReference type="RNAct" id="Q8R4F1">
    <property type="molecule type" value="protein"/>
</dbReference>
<dbReference type="Bgee" id="ENSMUSG00000035513">
    <property type="expression patterns" value="Expressed in granulocyte and 81 other cell types or tissues"/>
</dbReference>
<dbReference type="ExpressionAtlas" id="Q8R4F1">
    <property type="expression patterns" value="baseline and differential"/>
</dbReference>
<dbReference type="GO" id="GO:0030424">
    <property type="term" value="C:axon"/>
    <property type="evidence" value="ECO:0000314"/>
    <property type="project" value="MGI"/>
</dbReference>
<dbReference type="GO" id="GO:0098978">
    <property type="term" value="C:glutamatergic synapse"/>
    <property type="evidence" value="ECO:0000314"/>
    <property type="project" value="SynGO"/>
</dbReference>
<dbReference type="GO" id="GO:0005886">
    <property type="term" value="C:plasma membrane"/>
    <property type="evidence" value="ECO:0000314"/>
    <property type="project" value="UniProtKB"/>
</dbReference>
<dbReference type="GO" id="GO:0048787">
    <property type="term" value="C:presynaptic active zone membrane"/>
    <property type="evidence" value="ECO:0000314"/>
    <property type="project" value="SynGO"/>
</dbReference>
<dbReference type="GO" id="GO:0098685">
    <property type="term" value="C:Schaffer collateral - CA1 synapse"/>
    <property type="evidence" value="ECO:0000314"/>
    <property type="project" value="SynGO"/>
</dbReference>
<dbReference type="GO" id="GO:0098552">
    <property type="term" value="C:side of membrane"/>
    <property type="evidence" value="ECO:0007669"/>
    <property type="project" value="UniProtKB-KW"/>
</dbReference>
<dbReference type="GO" id="GO:0007409">
    <property type="term" value="P:axonogenesis"/>
    <property type="evidence" value="ECO:0000314"/>
    <property type="project" value="MGI"/>
</dbReference>
<dbReference type="GO" id="GO:0050804">
    <property type="term" value="P:modulation of chemical synaptic transmission"/>
    <property type="evidence" value="ECO:0000314"/>
    <property type="project" value="SynGO"/>
</dbReference>
<dbReference type="GO" id="GO:0098698">
    <property type="term" value="P:postsynaptic specialization assembly"/>
    <property type="evidence" value="ECO:0000314"/>
    <property type="project" value="SynGO"/>
</dbReference>
<dbReference type="GO" id="GO:2001222">
    <property type="term" value="P:regulation of neuron migration"/>
    <property type="evidence" value="ECO:0000315"/>
    <property type="project" value="UniProtKB"/>
</dbReference>
<dbReference type="GO" id="GO:0150011">
    <property type="term" value="P:regulation of neuron projection arborization"/>
    <property type="evidence" value="ECO:0000315"/>
    <property type="project" value="UniProtKB"/>
</dbReference>
<dbReference type="GO" id="GO:0010975">
    <property type="term" value="P:regulation of neuron projection development"/>
    <property type="evidence" value="ECO:0000315"/>
    <property type="project" value="UniProtKB"/>
</dbReference>
<dbReference type="GO" id="GO:1905606">
    <property type="term" value="P:regulation of presynapse assembly"/>
    <property type="evidence" value="ECO:0000314"/>
    <property type="project" value="SynGO"/>
</dbReference>
<dbReference type="GO" id="GO:0099560">
    <property type="term" value="P:synaptic membrane adhesion"/>
    <property type="evidence" value="ECO:0000314"/>
    <property type="project" value="SynGO"/>
</dbReference>
<dbReference type="CDD" id="cd00054">
    <property type="entry name" value="EGF_CA"/>
    <property type="match status" value="1"/>
</dbReference>
<dbReference type="CDD" id="cd00055">
    <property type="entry name" value="EGF_Lam"/>
    <property type="match status" value="3"/>
</dbReference>
<dbReference type="FunFam" id="2.10.25.10:FF:000112">
    <property type="entry name" value="Netrin G1"/>
    <property type="match status" value="1"/>
</dbReference>
<dbReference type="FunFam" id="2.60.120.260:FF:000005">
    <property type="entry name" value="Netrin G1"/>
    <property type="match status" value="1"/>
</dbReference>
<dbReference type="FunFam" id="2.10.25.10:FF:000180">
    <property type="entry name" value="Netrin G2"/>
    <property type="match status" value="1"/>
</dbReference>
<dbReference type="FunFam" id="2.10.25.10:FF:000439">
    <property type="entry name" value="Netrin G2"/>
    <property type="match status" value="1"/>
</dbReference>
<dbReference type="FunFam" id="2.10.25.10:FF:001530">
    <property type="entry name" value="Netrin-G2"/>
    <property type="match status" value="1"/>
</dbReference>
<dbReference type="Gene3D" id="2.60.120.260">
    <property type="entry name" value="Galactose-binding domain-like"/>
    <property type="match status" value="1"/>
</dbReference>
<dbReference type="Gene3D" id="2.10.25.10">
    <property type="entry name" value="Laminin"/>
    <property type="match status" value="4"/>
</dbReference>
<dbReference type="InterPro" id="IPR000742">
    <property type="entry name" value="EGF-like_dom"/>
</dbReference>
<dbReference type="InterPro" id="IPR050440">
    <property type="entry name" value="Laminin/Netrin_ECM"/>
</dbReference>
<dbReference type="InterPro" id="IPR008211">
    <property type="entry name" value="Laminin_N"/>
</dbReference>
<dbReference type="InterPro" id="IPR002049">
    <property type="entry name" value="LE_dom"/>
</dbReference>
<dbReference type="InterPro" id="IPR056863">
    <property type="entry name" value="LMN_ATRN_NET-like_EGF"/>
</dbReference>
<dbReference type="InterPro" id="IPR036278">
    <property type="entry name" value="Sialidase_sf"/>
</dbReference>
<dbReference type="PANTHER" id="PTHR10574:SF27">
    <property type="entry name" value="NETRIN-G2"/>
    <property type="match status" value="1"/>
</dbReference>
<dbReference type="PANTHER" id="PTHR10574">
    <property type="entry name" value="NETRIN/LAMININ-RELATED"/>
    <property type="match status" value="1"/>
</dbReference>
<dbReference type="Pfam" id="PF00053">
    <property type="entry name" value="EGF_laminin"/>
    <property type="match status" value="2"/>
</dbReference>
<dbReference type="Pfam" id="PF24973">
    <property type="entry name" value="EGF_LMN_ATRN"/>
    <property type="match status" value="1"/>
</dbReference>
<dbReference type="Pfam" id="PF00055">
    <property type="entry name" value="Laminin_N"/>
    <property type="match status" value="1"/>
</dbReference>
<dbReference type="SMART" id="SM00181">
    <property type="entry name" value="EGF"/>
    <property type="match status" value="2"/>
</dbReference>
<dbReference type="SMART" id="SM00180">
    <property type="entry name" value="EGF_Lam"/>
    <property type="match status" value="3"/>
</dbReference>
<dbReference type="SMART" id="SM00136">
    <property type="entry name" value="LamNT"/>
    <property type="match status" value="1"/>
</dbReference>
<dbReference type="SUPFAM" id="SSF57196">
    <property type="entry name" value="EGF/Laminin"/>
    <property type="match status" value="4"/>
</dbReference>
<dbReference type="SUPFAM" id="SSF50939">
    <property type="entry name" value="Sialidases"/>
    <property type="match status" value="1"/>
</dbReference>
<dbReference type="PROSITE" id="PS00022">
    <property type="entry name" value="EGF_1"/>
    <property type="match status" value="3"/>
</dbReference>
<dbReference type="PROSITE" id="PS01186">
    <property type="entry name" value="EGF_2"/>
    <property type="match status" value="1"/>
</dbReference>
<dbReference type="PROSITE" id="PS50026">
    <property type="entry name" value="EGF_3"/>
    <property type="match status" value="1"/>
</dbReference>
<dbReference type="PROSITE" id="PS01248">
    <property type="entry name" value="EGF_LAM_1"/>
    <property type="match status" value="2"/>
</dbReference>
<dbReference type="PROSITE" id="PS50027">
    <property type="entry name" value="EGF_LAM_2"/>
    <property type="match status" value="3"/>
</dbReference>
<dbReference type="PROSITE" id="PS51117">
    <property type="entry name" value="LAMININ_NTER"/>
    <property type="match status" value="1"/>
</dbReference>
<keyword id="KW-0025">Alternative splicing</keyword>
<keyword id="KW-1003">Cell membrane</keyword>
<keyword id="KW-0217">Developmental protein</keyword>
<keyword id="KW-0221">Differentiation</keyword>
<keyword id="KW-1015">Disulfide bond</keyword>
<keyword id="KW-0325">Glycoprotein</keyword>
<keyword id="KW-0336">GPI-anchor</keyword>
<keyword id="KW-0424">Laminin EGF-like domain</keyword>
<keyword id="KW-0449">Lipoprotein</keyword>
<keyword id="KW-0472">Membrane</keyword>
<keyword id="KW-0524">Neurogenesis</keyword>
<keyword id="KW-1185">Reference proteome</keyword>
<keyword id="KW-0677">Repeat</keyword>
<keyword id="KW-0732">Signal</keyword>
<protein>
    <recommendedName>
        <fullName>Netrin-G2</fullName>
    </recommendedName>
    <alternativeName>
        <fullName>Laminet-2</fullName>
    </alternativeName>
</protein>
<name>NTNG2_MOUSE</name>
<feature type="signal peptide" evidence="2">
    <location>
        <begin position="1"/>
        <end position="17"/>
    </location>
</feature>
<feature type="chain" id="PRO_0000017097" description="Netrin-G2">
    <location>
        <begin position="18"/>
        <end position="566"/>
    </location>
</feature>
<feature type="propeptide" id="PRO_0000017098" description="Removed in mature form" evidence="2">
    <location>
        <begin position="567"/>
        <end position="589"/>
    </location>
</feature>
<feature type="domain" description="Laminin N-terminal" evidence="4">
    <location>
        <begin position="35"/>
        <end position="286"/>
    </location>
</feature>
<feature type="domain" description="Laminin EGF-like 1" evidence="3">
    <location>
        <begin position="287"/>
        <end position="346"/>
    </location>
</feature>
<feature type="domain" description="Laminin EGF-like 2" evidence="3">
    <location>
        <begin position="413"/>
        <end position="468"/>
    </location>
</feature>
<feature type="domain" description="Laminin EGF-like 3" evidence="3">
    <location>
        <begin position="469"/>
        <end position="513"/>
    </location>
</feature>
<feature type="region of interest" description="NGL discriminant loop I" evidence="1">
    <location>
        <begin position="69"/>
        <end position="88"/>
    </location>
</feature>
<feature type="region of interest" description="NGL discriminant loop II" evidence="1">
    <location>
        <begin position="201"/>
        <end position="203"/>
    </location>
</feature>
<feature type="region of interest" description="NGL discriminant loop III" evidence="1">
    <location>
        <begin position="264"/>
        <end position="267"/>
    </location>
</feature>
<feature type="lipid moiety-binding region" description="GPI-anchor amidated glycine" evidence="2">
    <location>
        <position position="566"/>
    </location>
</feature>
<feature type="glycosylation site" description="N-linked (GlcNAc...) asparagine" evidence="2">
    <location>
        <position position="122"/>
    </location>
</feature>
<feature type="glycosylation site" description="N-linked (GlcNAc...) asparagine" evidence="2">
    <location>
        <position position="128"/>
    </location>
</feature>
<feature type="glycosylation site" description="N-linked (GlcNAc...) asparagine" evidence="2">
    <location>
        <position position="310"/>
    </location>
</feature>
<feature type="glycosylation site" description="N-linked (GlcNAc...) asparagine" evidence="2">
    <location>
        <position position="455"/>
    </location>
</feature>
<feature type="glycosylation site" description="N-linked (GlcNAc...) asparagine" evidence="2">
    <location>
        <position position="482"/>
    </location>
</feature>
<feature type="disulfide bond" evidence="1">
    <location>
        <begin position="22"/>
        <end position="39"/>
    </location>
</feature>
<feature type="disulfide bond" evidence="1">
    <location>
        <begin position="61"/>
        <end position="81"/>
    </location>
</feature>
<feature type="disulfide bond" evidence="1">
    <location>
        <begin position="69"/>
        <end position="77"/>
    </location>
</feature>
<feature type="disulfide bond" evidence="1">
    <location>
        <begin position="171"/>
        <end position="195"/>
    </location>
</feature>
<feature type="disulfide bond" evidence="1">
    <location>
        <begin position="287"/>
        <end position="296"/>
    </location>
</feature>
<feature type="disulfide bond" evidence="1">
    <location>
        <begin position="289"/>
        <end position="305"/>
    </location>
</feature>
<feature type="disulfide bond" evidence="1">
    <location>
        <begin position="307"/>
        <end position="316"/>
    </location>
</feature>
<feature type="disulfide bond" evidence="1">
    <location>
        <begin position="319"/>
        <end position="344"/>
    </location>
</feature>
<feature type="disulfide bond" evidence="2">
    <location>
        <begin position="413"/>
        <end position="422"/>
    </location>
</feature>
<feature type="disulfide bond" evidence="2">
    <location>
        <begin position="415"/>
        <end position="433"/>
    </location>
</feature>
<feature type="disulfide bond" evidence="2">
    <location>
        <begin position="436"/>
        <end position="445"/>
    </location>
</feature>
<feature type="disulfide bond" evidence="2">
    <location>
        <begin position="448"/>
        <end position="466"/>
    </location>
</feature>
<feature type="disulfide bond" evidence="2">
    <location>
        <begin position="469"/>
        <end position="481"/>
    </location>
</feature>
<feature type="disulfide bond" evidence="2">
    <location>
        <begin position="471"/>
        <end position="487"/>
    </location>
</feature>
<feature type="disulfide bond" evidence="2">
    <location>
        <begin position="489"/>
        <end position="498"/>
    </location>
</feature>
<feature type="disulfide bond" evidence="2">
    <location>
        <begin position="501"/>
        <end position="511"/>
    </location>
</feature>
<feature type="disulfide bond" evidence="1">
    <location>
        <begin position="516"/>
        <end position="529"/>
    </location>
</feature>
<feature type="disulfide bond" evidence="1">
    <location>
        <begin position="523"/>
        <end position="535"/>
    </location>
</feature>
<feature type="disulfide bond" evidence="1">
    <location>
        <begin position="537"/>
        <end position="546"/>
    </location>
</feature>
<feature type="splice variant" id="VSP_050562" description="In isoform 2A." evidence="11 12">
    <location>
        <begin position="353"/>
        <end position="411"/>
    </location>
</feature>
<feature type="splice variant" id="VSP_050564" description="In isoform 2C." evidence="11 12">
    <location>
        <begin position="353"/>
        <end position="377"/>
    </location>
</feature>
<feature type="splice variant" id="VSP_050565" description="In isoform 2C." evidence="11 12">
    <original>A</original>
    <variation>T</variation>
    <location>
        <position position="378"/>
    </location>
</feature>
<feature type="splice variant" id="VSP_050563" description="In isoform 2A." evidence="11 12">
    <original>D</original>
    <variation>N</variation>
    <location>
        <position position="412"/>
    </location>
</feature>
<feature type="sequence conflict" description="In Ref. 2; AAL84788/AAL84789." evidence="13" ref="2">
    <original>P</original>
    <variation>S</variation>
    <location>
        <position position="41"/>
    </location>
</feature>
<feature type="sequence conflict" description="In Ref. 2; AAL84789." evidence="13" ref="2">
    <original>S</original>
    <variation>F</variation>
    <location>
        <position position="392"/>
    </location>
</feature>
<sequence>MLRLLALFLHCLPLVSGDYDICKSWVTTDEGPTWEFYACQPKVMRLKDYVKVKVEPSGITCGDPPERFCSHENPYLCSNECDASNPDLAHPPRLMFDREDEGLATYWQSVTWSRYPSPLEANITLSWNKSVELTDDVVVTFEYGRPTVMVLEKSLDNGRTWQPYQFYAEDCMEAFGMSARRARDMSPSSAHRVLCTEEYSRWAGSKKEKHVRFEVRDRFAIFAGPDLRNMDNLYTRMESAKGLKEFFTFTDLRMRLLRPALGGTYVQRENLYKYFYAISNIEVIGRCKCNLHANLCTVREGSLQCECEHNTTGPDCGRCKKNFRTRAWRAGSYLPLPHGSPNACAAAGSAFGSQTKPPTMAPLGDSSFWPQVSSSAEAVAISVAVPSQAKDSTLFELKPRSPQVIPIEEFQDCECYGHSNRCSYIDFLNVVTCVSCKHNTRGQHCQHCRLGYYRNGSAELDDENVCIECNCNQIGSVHDRCNETGFCECREGAVGPKCDDCLPTHYWRQGCYPNVCDDDQLLCQNGGTCQQNQRCACPPGYTGIRCEQPRCDLADDAGPDCDRAPGIVPRPDTLLGCLLLLGLAARLAC</sequence>
<comment type="function">
    <text evidence="5 9 10">Involved in controlling patterning and neuronal circuit formation at the laminar, cellular, subcellular and synaptic levels. Promotes neurite outgrowth of both axons and dendrites.</text>
</comment>
<comment type="subunit">
    <text evidence="7 8">Interacts with LRRC4.</text>
</comment>
<comment type="subcellular location">
    <subcellularLocation>
        <location evidence="5">Cell membrane</location>
        <topology evidence="5">Lipid-anchor</topology>
        <topology evidence="5">GPI-anchor</topology>
        <orientation evidence="5">Extracellular side</orientation>
    </subcellularLocation>
</comment>
<comment type="alternative products">
    <event type="alternative splicing"/>
    <isoform>
        <id>Q8R4F1-1</id>
        <name evidence="6">2B</name>
        <name evidence="5">G2b</name>
        <sequence type="displayed"/>
    </isoform>
    <isoform>
        <id>Q8R4F1-2</id>
        <name evidence="6">2A</name>
        <name evidence="5">G2a</name>
        <sequence type="described" ref="VSP_050562 VSP_050563"/>
    </isoform>
    <isoform>
        <id>Q8R4F1-3</id>
        <name evidence="13">2C</name>
        <name evidence="5">G2c</name>
        <sequence type="described" ref="VSP_050564 VSP_050565"/>
    </isoform>
</comment>
<comment type="tissue specificity">
    <text evidence="5 6">Expression is restricted primarily to neurons of the CNS, particularly in the cerebral cortex, habenular nucleus and superior colliculus. Low levels in lung, kidney, heart and spleen.</text>
</comment>
<comment type="developmental stage">
    <text evidence="5">Expression is detected from embryonic day 9. Strong expression is maintained from embryonic day 14 well into adulthood.</text>
</comment>
<comment type="domain">
    <text evidence="1">The laminin N-terminal domain mediates 1:1 binding to NGL ligand with sub-micromolar affinity. Three NGL-binding loops mediate discrimination for LRRC4/NGL2 among other NGLs by binding specifically to its LRR repeats. This specificity drives the sorting of a mixed population of molecules into discrete cell surface subdomains (By similarity).</text>
</comment>
<comment type="PTM">
    <text evidence="6">N-glycosylated.</text>
</comment>
<reference evidence="13" key="1">
    <citation type="journal article" date="2002" name="Mech. Dev.">
        <title>Complementary expression and neurite outgrowth activity of netrin-G subfamily members.</title>
        <authorList>
            <person name="Nakashiba T."/>
            <person name="Nishimura S."/>
            <person name="Ikeda T."/>
            <person name="Itohara S."/>
        </authorList>
    </citation>
    <scope>NUCLEOTIDE SEQUENCE [MRNA] (ISOFORMS 2A; 2B AND 2C)</scope>
    <scope>FUNCTION</scope>
    <scope>SUBCELLULAR LOCATION</scope>
    <scope>TISSUE SPECIFICITY</scope>
    <scope>DEVELOPMENTAL STAGE</scope>
    <source>
        <strain evidence="14">C57BL/6J</strain>
        <tissue evidence="14">Brain</tissue>
    </source>
</reference>
<reference evidence="13" key="2">
    <citation type="journal article" date="2002" name="Mol. Cell. Neurosci.">
        <title>Laminets: laminin- and netrin-related genes expressed in distinct neuronal subsets.</title>
        <authorList>
            <person name="Yin Y."/>
            <person name="Miner J.H."/>
            <person name="Sanes J.R."/>
        </authorList>
    </citation>
    <scope>NUCLEOTIDE SEQUENCE [MRNA] (ISOFORMS 2A AND 2B)</scope>
    <scope>TISSUE SPECIFICITY</scope>
    <scope>GLYCOSYLATION</scope>
    <source>
        <tissue evidence="6">Brain</tissue>
    </source>
</reference>
<reference key="3">
    <citation type="journal article" date="2009" name="PLoS Biol.">
        <title>Lineage-specific biology revealed by a finished genome assembly of the mouse.</title>
        <authorList>
            <person name="Church D.M."/>
            <person name="Goodstadt L."/>
            <person name="Hillier L.W."/>
            <person name="Zody M.C."/>
            <person name="Goldstein S."/>
            <person name="She X."/>
            <person name="Bult C.J."/>
            <person name="Agarwala R."/>
            <person name="Cherry J.L."/>
            <person name="DiCuccio M."/>
            <person name="Hlavina W."/>
            <person name="Kapustin Y."/>
            <person name="Meric P."/>
            <person name="Maglott D."/>
            <person name="Birtle Z."/>
            <person name="Marques A.C."/>
            <person name="Graves T."/>
            <person name="Zhou S."/>
            <person name="Teague B."/>
            <person name="Potamousis K."/>
            <person name="Churas C."/>
            <person name="Place M."/>
            <person name="Herschleb J."/>
            <person name="Runnheim R."/>
            <person name="Forrest D."/>
            <person name="Amos-Landgraf J."/>
            <person name="Schwartz D.C."/>
            <person name="Cheng Z."/>
            <person name="Lindblad-Toh K."/>
            <person name="Eichler E.E."/>
            <person name="Ponting C.P."/>
        </authorList>
    </citation>
    <scope>NUCLEOTIDE SEQUENCE [LARGE SCALE GENOMIC DNA]</scope>
    <source>
        <strain>C57BL/6J</strain>
    </source>
</reference>
<reference key="4">
    <citation type="submission" date="2005-07" db="EMBL/GenBank/DDBJ databases">
        <authorList>
            <person name="Mural R.J."/>
            <person name="Adams M.D."/>
            <person name="Myers E.W."/>
            <person name="Smith H.O."/>
            <person name="Venter J.C."/>
        </authorList>
    </citation>
    <scope>NUCLEOTIDE SEQUENCE [LARGE SCALE GENOMIC DNA]</scope>
</reference>
<reference key="5">
    <citation type="journal article" date="2006" name="Nat. Neurosci.">
        <title>NGL family PSD-95-interacting adhesion molecules regulate excitatory synapse formation.</title>
        <authorList>
            <person name="Kim S."/>
            <person name="Burette A."/>
            <person name="Chung H.S."/>
            <person name="Kwon S.-K."/>
            <person name="Woo J."/>
            <person name="Lee H.W."/>
            <person name="Kim K."/>
            <person name="Kim H."/>
            <person name="Weinberg R.J."/>
            <person name="Kim E."/>
        </authorList>
    </citation>
    <scope>INTERACTION WITH LRRC4</scope>
</reference>
<reference key="6">
    <citation type="journal article" date="2008" name="Genes Brain Behav.">
        <title>Netrin-G2 and netrin-G2 ligand are both required for normal auditory responsiveness.</title>
        <authorList>
            <person name="Zhang W."/>
            <person name="Rajan I."/>
            <person name="Savelieva K.V."/>
            <person name="Wang C.Y."/>
            <person name="Vogel P."/>
            <person name="Kelly M."/>
            <person name="Xu N."/>
            <person name="Hasson B."/>
            <person name="Jarman W."/>
            <person name="Lanthorn T.H."/>
        </authorList>
    </citation>
    <scope>INTERACTION WITH LRRC4</scope>
</reference>
<reference key="7">
    <citation type="journal article" date="2019" name="Am. J. Hum. Genet.">
        <title>Homozygous Missense Variants in NTNG2, Encoding a Presynaptic Netrin-G2 Adhesion Protein, Lead to a Distinct Neurodevelopmental Disorder.</title>
        <authorList>
            <person name="Dias C.M."/>
            <person name="Punetha J."/>
            <person name="Zheng C."/>
            <person name="Mazaheri N."/>
            <person name="Rad A."/>
            <person name="Efthymiou S."/>
            <person name="Petersen A."/>
            <person name="Dehghani M."/>
            <person name="Pehlivan D."/>
            <person name="Partlow J.N."/>
            <person name="Posey J.E."/>
            <person name="Salpietro V."/>
            <person name="Gezdirici A."/>
            <person name="Malamiri R.A."/>
            <person name="Al Menabawy N.M."/>
            <person name="Selim L.A."/>
            <person name="Vahidi Mehrjardi M.Y."/>
            <person name="Banu S."/>
            <person name="Polla D.L."/>
            <person name="Yang E."/>
            <person name="Rezazadeh Varaghchi J."/>
            <person name="Mitani T."/>
            <person name="van Beusekom E."/>
            <person name="Najafi M."/>
            <person name="Sedaghat A."/>
            <person name="Keller-Ramey J."/>
            <person name="Durham L."/>
            <person name="Coban-Akdemir Z."/>
            <person name="Karaca E."/>
            <person name="Orlova V."/>
            <person name="Schaeken L.L.M."/>
            <person name="Sherafat A."/>
            <person name="Jhangiani S.N."/>
            <person name="Stanley V."/>
            <person name="Shariati G."/>
            <person name="Galehdari H."/>
            <person name="Gleeson J.G."/>
            <person name="Walsh C.A."/>
            <person name="Lupski J.R."/>
            <person name="Seiradake E."/>
            <person name="Houlden H."/>
            <person name="van Bokhoven H."/>
            <person name="Maroofian R."/>
        </authorList>
    </citation>
    <scope>FUNCTION</scope>
</reference>
<reference key="8">
    <citation type="journal article" date="2020" name="Hum. Mutat.">
        <title>Netrin-G2 dysfunction causes a Rett-like phenotype with areflexia.</title>
        <authorList>
            <person name="Heimer G."/>
            <person name="van Woerden G.M."/>
            <person name="Barel O."/>
            <person name="Marek-Yagel D."/>
            <person name="Kol N."/>
            <person name="Munting J.B."/>
            <person name="Borghei M."/>
            <person name="Atawneh O.M."/>
            <person name="Nissenkorn A."/>
            <person name="Rechavi G."/>
            <person name="Anikster Y."/>
            <person name="Elgersma Y."/>
            <person name="Kushner S.A."/>
            <person name="Ben Zeev B."/>
        </authorList>
    </citation>
    <scope>FUNCTION</scope>
</reference>
<accession>Q8R4F1</accession>
<accession>A2AKX0</accession>
<accession>Q8R4F2</accession>
<accession>Q8VIP6</accession>
<accession>Q8VIP7</accession>
<accession>Q8VIP8</accession>
<organism evidence="13">
    <name type="scientific">Mus musculus</name>
    <name type="common">Mouse</name>
    <dbReference type="NCBI Taxonomy" id="10090"/>
    <lineage>
        <taxon>Eukaryota</taxon>
        <taxon>Metazoa</taxon>
        <taxon>Chordata</taxon>
        <taxon>Craniata</taxon>
        <taxon>Vertebrata</taxon>
        <taxon>Euteleostomi</taxon>
        <taxon>Mammalia</taxon>
        <taxon>Eutheria</taxon>
        <taxon>Euarchontoglires</taxon>
        <taxon>Glires</taxon>
        <taxon>Rodentia</taxon>
        <taxon>Myomorpha</taxon>
        <taxon>Muroidea</taxon>
        <taxon>Muridae</taxon>
        <taxon>Murinae</taxon>
        <taxon>Mus</taxon>
        <taxon>Mus</taxon>
    </lineage>
</organism>
<gene>
    <name type="primary">Ntng2</name>
    <name type="synonym">Lmnt2</name>
</gene>
<evidence type="ECO:0000250" key="1"/>
<evidence type="ECO:0000255" key="2"/>
<evidence type="ECO:0000255" key="3">
    <source>
        <dbReference type="PROSITE-ProRule" id="PRU00460"/>
    </source>
</evidence>
<evidence type="ECO:0000255" key="4">
    <source>
        <dbReference type="PROSITE-ProRule" id="PRU00466"/>
    </source>
</evidence>
<evidence type="ECO:0000269" key="5">
    <source>
    </source>
</evidence>
<evidence type="ECO:0000269" key="6">
    <source>
    </source>
</evidence>
<evidence type="ECO:0000269" key="7">
    <source>
    </source>
</evidence>
<evidence type="ECO:0000269" key="8">
    <source>
    </source>
</evidence>
<evidence type="ECO:0000269" key="9">
    <source>
    </source>
</evidence>
<evidence type="ECO:0000269" key="10">
    <source>
    </source>
</evidence>
<evidence type="ECO:0000303" key="11">
    <source>
    </source>
</evidence>
<evidence type="ECO:0000303" key="12">
    <source>
    </source>
</evidence>
<evidence type="ECO:0000305" key="13"/>
<evidence type="ECO:0000312" key="14">
    <source>
        <dbReference type="EMBL" id="BAB71994.1"/>
    </source>
</evidence>
<proteinExistence type="evidence at protein level"/>